<accession>A5UL88</accession>
<keyword id="KW-0687">Ribonucleoprotein</keyword>
<keyword id="KW-0689">Ribosomal protein</keyword>
<keyword id="KW-0694">RNA-binding</keyword>
<keyword id="KW-0699">rRNA-binding</keyword>
<proteinExistence type="inferred from homology"/>
<feature type="chain" id="PRO_1000142155" description="Large ribosomal subunit protein uL4">
    <location>
        <begin position="1"/>
        <end position="254"/>
    </location>
</feature>
<feature type="region of interest" description="Disordered" evidence="2">
    <location>
        <begin position="45"/>
        <end position="70"/>
    </location>
</feature>
<organism>
    <name type="scientific">Methanobrevibacter smithii (strain ATCC 35061 / DSM 861 / OCM 144 / PS)</name>
    <dbReference type="NCBI Taxonomy" id="420247"/>
    <lineage>
        <taxon>Archaea</taxon>
        <taxon>Methanobacteriati</taxon>
        <taxon>Methanobacteriota</taxon>
        <taxon>Methanomada group</taxon>
        <taxon>Methanobacteria</taxon>
        <taxon>Methanobacteriales</taxon>
        <taxon>Methanobacteriaceae</taxon>
        <taxon>Methanobrevibacter</taxon>
    </lineage>
</organism>
<name>RL4_METS3</name>
<protein>
    <recommendedName>
        <fullName evidence="1">Large ribosomal subunit protein uL4</fullName>
    </recommendedName>
    <alternativeName>
        <fullName evidence="3">50S ribosomal protein L4</fullName>
    </alternativeName>
</protein>
<comment type="function">
    <text evidence="1">One of the primary rRNA binding proteins, this protein initially binds near the 5'-end of the 23S rRNA. It is important during the early stages of 50S assembly. It makes multiple contacts with different domains of the 23S rRNA in the assembled 50S subunit and ribosome.</text>
</comment>
<comment type="function">
    <text evidence="1">Forms part of the polypeptide exit tunnel.</text>
</comment>
<comment type="subunit">
    <text evidence="1">Part of the 50S ribosomal subunit.</text>
</comment>
<comment type="similarity">
    <text evidence="1">Belongs to the universal ribosomal protein uL4 family.</text>
</comment>
<dbReference type="EMBL" id="CP000678">
    <property type="protein sequence ID" value="ABQ86966.1"/>
    <property type="molecule type" value="Genomic_DNA"/>
</dbReference>
<dbReference type="SMR" id="A5UL88"/>
<dbReference type="STRING" id="420247.Msm_0761"/>
<dbReference type="EnsemblBacteria" id="ABQ86966">
    <property type="protein sequence ID" value="ABQ86966"/>
    <property type="gene ID" value="Msm_0761"/>
</dbReference>
<dbReference type="KEGG" id="msi:Msm_0761"/>
<dbReference type="PATRIC" id="fig|420247.28.peg.758"/>
<dbReference type="eggNOG" id="arCOG04071">
    <property type="taxonomic scope" value="Archaea"/>
</dbReference>
<dbReference type="HOGENOM" id="CLU_026535_0_0_2"/>
<dbReference type="Proteomes" id="UP000001992">
    <property type="component" value="Chromosome"/>
</dbReference>
<dbReference type="GO" id="GO:1990904">
    <property type="term" value="C:ribonucleoprotein complex"/>
    <property type="evidence" value="ECO:0007669"/>
    <property type="project" value="UniProtKB-KW"/>
</dbReference>
<dbReference type="GO" id="GO:0005840">
    <property type="term" value="C:ribosome"/>
    <property type="evidence" value="ECO:0007669"/>
    <property type="project" value="UniProtKB-KW"/>
</dbReference>
<dbReference type="GO" id="GO:0019843">
    <property type="term" value="F:rRNA binding"/>
    <property type="evidence" value="ECO:0007669"/>
    <property type="project" value="UniProtKB-UniRule"/>
</dbReference>
<dbReference type="GO" id="GO:0003735">
    <property type="term" value="F:structural constituent of ribosome"/>
    <property type="evidence" value="ECO:0007669"/>
    <property type="project" value="InterPro"/>
</dbReference>
<dbReference type="GO" id="GO:0006412">
    <property type="term" value="P:translation"/>
    <property type="evidence" value="ECO:0007669"/>
    <property type="project" value="UniProtKB-UniRule"/>
</dbReference>
<dbReference type="FunFam" id="3.40.1370.10:FF:000011">
    <property type="entry name" value="50S ribosomal protein L4"/>
    <property type="match status" value="1"/>
</dbReference>
<dbReference type="Gene3D" id="3.40.1370.10">
    <property type="match status" value="1"/>
</dbReference>
<dbReference type="HAMAP" id="MF_01328_A">
    <property type="entry name" value="Ribosomal_uL4_A"/>
    <property type="match status" value="1"/>
</dbReference>
<dbReference type="InterPro" id="IPR002136">
    <property type="entry name" value="Ribosomal_uL4"/>
</dbReference>
<dbReference type="InterPro" id="IPR023574">
    <property type="entry name" value="Ribosomal_uL4_dom_sf"/>
</dbReference>
<dbReference type="InterPro" id="IPR013000">
    <property type="entry name" value="Ribosomal_uL4_euk/arc_CS"/>
</dbReference>
<dbReference type="InterPro" id="IPR045240">
    <property type="entry name" value="Ribosomal_uL4_euk/arch"/>
</dbReference>
<dbReference type="InterPro" id="IPR019970">
    <property type="entry name" value="Ribosomall_uL4-arc"/>
</dbReference>
<dbReference type="NCBIfam" id="TIGR03672">
    <property type="entry name" value="rpl4p_arch"/>
    <property type="match status" value="1"/>
</dbReference>
<dbReference type="PANTHER" id="PTHR19431">
    <property type="entry name" value="60S RIBOSOMAL PROTEIN L4"/>
    <property type="match status" value="1"/>
</dbReference>
<dbReference type="Pfam" id="PF00573">
    <property type="entry name" value="Ribosomal_L4"/>
    <property type="match status" value="1"/>
</dbReference>
<dbReference type="SUPFAM" id="SSF52166">
    <property type="entry name" value="Ribosomal protein L4"/>
    <property type="match status" value="1"/>
</dbReference>
<dbReference type="PROSITE" id="PS00939">
    <property type="entry name" value="RIBOSOMAL_L1E"/>
    <property type="match status" value="1"/>
</dbReference>
<reference key="1">
    <citation type="journal article" date="2007" name="Proc. Natl. Acad. Sci. U.S.A.">
        <title>Genomic and metabolic adaptations of Methanobrevibacter smithii to the human gut.</title>
        <authorList>
            <person name="Samuel B.S."/>
            <person name="Hansen E.E."/>
            <person name="Manchester J.K."/>
            <person name="Coutinho P.M."/>
            <person name="Henrissat B."/>
            <person name="Fulton R."/>
            <person name="Latreille P."/>
            <person name="Kim K."/>
            <person name="Wilson R.K."/>
            <person name="Gordon J.I."/>
        </authorList>
    </citation>
    <scope>NUCLEOTIDE SEQUENCE [LARGE SCALE GENOMIC DNA]</scope>
    <source>
        <strain>ATCC 35061 / DSM 861 / OCM 144 / PS</strain>
    </source>
</reference>
<evidence type="ECO:0000255" key="1">
    <source>
        <dbReference type="HAMAP-Rule" id="MF_01328"/>
    </source>
</evidence>
<evidence type="ECO:0000256" key="2">
    <source>
        <dbReference type="SAM" id="MobiDB-lite"/>
    </source>
</evidence>
<evidence type="ECO:0000305" key="3"/>
<sequence length="254" mass="27972">MKANVYSMEGEVKEEIELPAIFNEEYRPDLIKRAVISAQTARVQPWGNDPEAGKRTSAKGWGSGRGTARVPRIKNGSKAAFVPMAVGGRRAHPTRAEKNHHEKINIKERRFAIRSAVAATANKELVENRGHRLGDLEQVPIIVEDDICSVKTTKQTREIFQNLGVYDDITRAKEGKRIRAGRGKTRGRKYKKVKGPLLVVGEDNGIKLGARNHAGVDVVTVENLNAELLAPGTHPGRLTIFTKSAVEKLGGLFQ</sequence>
<gene>
    <name evidence="1" type="primary">rpl4</name>
    <name type="ordered locus">Msm_0761</name>
</gene>